<name>RTC5_COLGM</name>
<protein>
    <recommendedName>
        <fullName>Restriction of telomere capping protein 5</fullName>
    </recommendedName>
</protein>
<gene>
    <name type="primary">RTC5</name>
    <name type="ORF">GLRG_06977</name>
</gene>
<reference key="1">
    <citation type="journal article" date="2012" name="Nat. Genet.">
        <title>Lifestyle transitions in plant pathogenic Colletotrichum fungi deciphered by genome and transcriptome analyses.</title>
        <authorList>
            <person name="O'Connell R.J."/>
            <person name="Thon M.R."/>
            <person name="Hacquard S."/>
            <person name="Amyotte S.G."/>
            <person name="Kleemann J."/>
            <person name="Torres M.F."/>
            <person name="Damm U."/>
            <person name="Buiate E.A."/>
            <person name="Epstein L."/>
            <person name="Alkan N."/>
            <person name="Altmueller J."/>
            <person name="Alvarado-Balderrama L."/>
            <person name="Bauser C.A."/>
            <person name="Becker C."/>
            <person name="Birren B.W."/>
            <person name="Chen Z."/>
            <person name="Choi J."/>
            <person name="Crouch J.A."/>
            <person name="Duvick J.P."/>
            <person name="Farman M.A."/>
            <person name="Gan P."/>
            <person name="Heiman D."/>
            <person name="Henrissat B."/>
            <person name="Howard R.J."/>
            <person name="Kabbage M."/>
            <person name="Koch C."/>
            <person name="Kracher B."/>
            <person name="Kubo Y."/>
            <person name="Law A.D."/>
            <person name="Lebrun M.-H."/>
            <person name="Lee Y.-H."/>
            <person name="Miyara I."/>
            <person name="Moore N."/>
            <person name="Neumann U."/>
            <person name="Nordstroem K."/>
            <person name="Panaccione D.G."/>
            <person name="Panstruga R."/>
            <person name="Place M."/>
            <person name="Proctor R.H."/>
            <person name="Prusky D."/>
            <person name="Rech G."/>
            <person name="Reinhardt R."/>
            <person name="Rollins J.A."/>
            <person name="Rounsley S."/>
            <person name="Schardl C.L."/>
            <person name="Schwartz D.C."/>
            <person name="Shenoy N."/>
            <person name="Shirasu K."/>
            <person name="Sikhakolli U.R."/>
            <person name="Stueber K."/>
            <person name="Sukno S.A."/>
            <person name="Sweigard J.A."/>
            <person name="Takano Y."/>
            <person name="Takahara H."/>
            <person name="Trail F."/>
            <person name="van der Does H.C."/>
            <person name="Voll L.M."/>
            <person name="Will I."/>
            <person name="Young S."/>
            <person name="Zeng Q."/>
            <person name="Zhang J."/>
            <person name="Zhou S."/>
            <person name="Dickman M.B."/>
            <person name="Schulze-Lefert P."/>
            <person name="Ver Loren van Themaat E."/>
            <person name="Ma L.-J."/>
            <person name="Vaillancourt L.J."/>
        </authorList>
    </citation>
    <scope>NUCLEOTIDE SEQUENCE [LARGE SCALE GENOMIC DNA]</scope>
    <source>
        <strain>M1.001 / M2 / FGSC 10212</strain>
    </source>
</reference>
<evidence type="ECO:0000250" key="1"/>
<evidence type="ECO:0000255" key="2">
    <source>
        <dbReference type="PROSITE-ProRule" id="PRU01234"/>
    </source>
</evidence>
<evidence type="ECO:0000256" key="3">
    <source>
        <dbReference type="SAM" id="MobiDB-lite"/>
    </source>
</evidence>
<evidence type="ECO:0000305" key="4"/>
<proteinExistence type="inferred from homology"/>
<organism>
    <name type="scientific">Colletotrichum graminicola (strain M1.001 / M2 / FGSC 10212)</name>
    <name type="common">Maize anthracnose fungus</name>
    <name type="synonym">Glomerella graminicola</name>
    <dbReference type="NCBI Taxonomy" id="645133"/>
    <lineage>
        <taxon>Eukaryota</taxon>
        <taxon>Fungi</taxon>
        <taxon>Dikarya</taxon>
        <taxon>Ascomycota</taxon>
        <taxon>Pezizomycotina</taxon>
        <taxon>Sordariomycetes</taxon>
        <taxon>Hypocreomycetidae</taxon>
        <taxon>Glomerellales</taxon>
        <taxon>Glomerellaceae</taxon>
        <taxon>Colletotrichum</taxon>
        <taxon>Colletotrichum graminicola species complex</taxon>
    </lineage>
</organism>
<dbReference type="EMBL" id="GG697358">
    <property type="protein sequence ID" value="EFQ31833.1"/>
    <property type="molecule type" value="Genomic_DNA"/>
</dbReference>
<dbReference type="RefSeq" id="XP_008095853.1">
    <property type="nucleotide sequence ID" value="XM_008097662.1"/>
</dbReference>
<dbReference type="SMR" id="E3QLU5"/>
<dbReference type="STRING" id="645133.E3QLU5"/>
<dbReference type="EnsemblFungi" id="EFQ31833">
    <property type="protein sequence ID" value="EFQ31833"/>
    <property type="gene ID" value="GLRG_06977"/>
</dbReference>
<dbReference type="GeneID" id="24412342"/>
<dbReference type="VEuPathDB" id="FungiDB:GLRG_06977"/>
<dbReference type="eggNOG" id="ENOG502QV3R">
    <property type="taxonomic scope" value="Eukaryota"/>
</dbReference>
<dbReference type="HOGENOM" id="CLU_011918_1_0_1"/>
<dbReference type="OrthoDB" id="289228at2759"/>
<dbReference type="Proteomes" id="UP000008782">
    <property type="component" value="Unassembled WGS sequence"/>
</dbReference>
<dbReference type="GO" id="GO:0005737">
    <property type="term" value="C:cytoplasm"/>
    <property type="evidence" value="ECO:0007669"/>
    <property type="project" value="UniProtKB-SubCell"/>
</dbReference>
<dbReference type="GO" id="GO:0005634">
    <property type="term" value="C:nucleus"/>
    <property type="evidence" value="ECO:0007669"/>
    <property type="project" value="TreeGrafter"/>
</dbReference>
<dbReference type="GO" id="GO:0006979">
    <property type="term" value="P:response to oxidative stress"/>
    <property type="evidence" value="ECO:0007669"/>
    <property type="project" value="TreeGrafter"/>
</dbReference>
<dbReference type="InterPro" id="IPR006571">
    <property type="entry name" value="TLDc_dom"/>
</dbReference>
<dbReference type="PANTHER" id="PTHR23354">
    <property type="entry name" value="NUCLEOLAR PROTEIN 7/ESTROGEN RECEPTOR COACTIVATOR-RELATED"/>
    <property type="match status" value="1"/>
</dbReference>
<dbReference type="PANTHER" id="PTHR23354:SF130">
    <property type="entry name" value="RESTRICTION OF TELOMERE CAPPING PROTEIN 5"/>
    <property type="match status" value="1"/>
</dbReference>
<dbReference type="Pfam" id="PF07534">
    <property type="entry name" value="TLD"/>
    <property type="match status" value="1"/>
</dbReference>
<dbReference type="SMART" id="SM00584">
    <property type="entry name" value="TLDc"/>
    <property type="match status" value="1"/>
</dbReference>
<dbReference type="PROSITE" id="PS51886">
    <property type="entry name" value="TLDC"/>
    <property type="match status" value="1"/>
</dbReference>
<accession>E3QLU5</accession>
<keyword id="KW-0963">Cytoplasm</keyword>
<keyword id="KW-1185">Reference proteome</keyword>
<feature type="chain" id="PRO_0000408823" description="Restriction of telomere capping protein 5">
    <location>
        <begin position="1"/>
        <end position="605"/>
    </location>
</feature>
<feature type="domain" description="TLDc" evidence="2">
    <location>
        <begin position="331"/>
        <end position="550"/>
    </location>
</feature>
<feature type="region of interest" description="Disordered" evidence="3">
    <location>
        <begin position="145"/>
        <end position="164"/>
    </location>
</feature>
<sequence>MGQVLSDESSRHLSHEELTHELASRFADKCFTSLEIYSFKDVFKSLADNQGGIRYLKEDTLARFLEIPDILHVSPVVFQMVSYIGAFPFLQNAPAVLGLDQMVMVVVIMTQRHKRVLAKGATDRAKLLFKSLAVHDRTASEAAVAAEKSSKEEQATQSQPRSHVAGFAVDEPVEEPEDDDDDLEIAAFELLDINDAVWQGDAPKVQGAMIPADNFRKLLMLLILIAPLNAQERLSMYSTRVTGDELDSLRATAEHILAAFLNVEKAPGIKFSQYNRVLPVCFPNLFSGFSPLFEHFLFSKNLDFTKHKGEEPVAEKQPEEIVQPLLPEPGEILNLNVLSQLSFFLPGSDLFRRLRPLYSGNKDGFSTGSFEGKVFNWRAPTILLVRGTRIDDDPRGSQQSTFAASIPPRRFPSGSKGERLTFGVYVSTPWKHTAKETFGEGDTVLFQLEPVHDVFPASRYNSEFISFTKAPTNRPMLGVGCPHPRPSQAHRRNEMLSLGSVSLLLDDSFEYGVFNHDWTAGGGAFATSVSRKFDFQDRFEIESLEVWGCGGDEEAKSQADRWAWEHREAEARRKVNLGTGDNDADRALLEMAGLVGSGRSGGSMA</sequence>
<comment type="function">
    <text evidence="1">May be involved in a process influencing telomere capping.</text>
</comment>
<comment type="subcellular location">
    <subcellularLocation>
        <location evidence="1">Cytoplasm</location>
    </subcellularLocation>
</comment>
<comment type="similarity">
    <text evidence="4">Belongs to the RTC5 family.</text>
</comment>